<keyword id="KW-0963">Cytoplasm</keyword>
<keyword id="KW-0251">Elongation factor</keyword>
<keyword id="KW-0379">Hydroxylation</keyword>
<keyword id="KW-0648">Protein biosynthesis</keyword>
<accession>B2K1Y7</accession>
<organism>
    <name type="scientific">Yersinia pseudotuberculosis serotype IB (strain PB1/+)</name>
    <dbReference type="NCBI Taxonomy" id="502801"/>
    <lineage>
        <taxon>Bacteria</taxon>
        <taxon>Pseudomonadati</taxon>
        <taxon>Pseudomonadota</taxon>
        <taxon>Gammaproteobacteria</taxon>
        <taxon>Enterobacterales</taxon>
        <taxon>Yersiniaceae</taxon>
        <taxon>Yersinia</taxon>
    </lineage>
</organism>
<name>EFP_YERPB</name>
<reference key="1">
    <citation type="submission" date="2008-04" db="EMBL/GenBank/DDBJ databases">
        <title>Complete sequence of Yersinia pseudotuberculosis PB1/+.</title>
        <authorList>
            <person name="Copeland A."/>
            <person name="Lucas S."/>
            <person name="Lapidus A."/>
            <person name="Glavina del Rio T."/>
            <person name="Dalin E."/>
            <person name="Tice H."/>
            <person name="Bruce D."/>
            <person name="Goodwin L."/>
            <person name="Pitluck S."/>
            <person name="Munk A.C."/>
            <person name="Brettin T."/>
            <person name="Detter J.C."/>
            <person name="Han C."/>
            <person name="Tapia R."/>
            <person name="Schmutz J."/>
            <person name="Larimer F."/>
            <person name="Land M."/>
            <person name="Hauser L."/>
            <person name="Challacombe J.F."/>
            <person name="Green L."/>
            <person name="Lindler L.E."/>
            <person name="Nikolich M.P."/>
            <person name="Richardson P."/>
        </authorList>
    </citation>
    <scope>NUCLEOTIDE SEQUENCE [LARGE SCALE GENOMIC DNA]</scope>
    <source>
        <strain>PB1/+</strain>
    </source>
</reference>
<evidence type="ECO:0000255" key="1">
    <source>
        <dbReference type="HAMAP-Rule" id="MF_00141"/>
    </source>
</evidence>
<dbReference type="EMBL" id="CP001048">
    <property type="protein sequence ID" value="ACC87422.1"/>
    <property type="molecule type" value="Genomic_DNA"/>
</dbReference>
<dbReference type="RefSeq" id="WP_002209131.1">
    <property type="nucleotide sequence ID" value="NZ_CP009780.1"/>
</dbReference>
<dbReference type="SMR" id="B2K1Y7"/>
<dbReference type="GeneID" id="57974254"/>
<dbReference type="KEGG" id="ypb:YPTS_0434"/>
<dbReference type="PATRIC" id="fig|502801.10.peg.4109"/>
<dbReference type="UniPathway" id="UPA00345"/>
<dbReference type="GO" id="GO:0005737">
    <property type="term" value="C:cytoplasm"/>
    <property type="evidence" value="ECO:0007669"/>
    <property type="project" value="UniProtKB-SubCell"/>
</dbReference>
<dbReference type="GO" id="GO:0003746">
    <property type="term" value="F:translation elongation factor activity"/>
    <property type="evidence" value="ECO:0007669"/>
    <property type="project" value="UniProtKB-UniRule"/>
</dbReference>
<dbReference type="GO" id="GO:0043043">
    <property type="term" value="P:peptide biosynthetic process"/>
    <property type="evidence" value="ECO:0007669"/>
    <property type="project" value="InterPro"/>
</dbReference>
<dbReference type="CDD" id="cd04470">
    <property type="entry name" value="S1_EF-P_repeat_1"/>
    <property type="match status" value="1"/>
</dbReference>
<dbReference type="CDD" id="cd05794">
    <property type="entry name" value="S1_EF-P_repeat_2"/>
    <property type="match status" value="1"/>
</dbReference>
<dbReference type="FunFam" id="2.30.30.30:FF:000003">
    <property type="entry name" value="Elongation factor P"/>
    <property type="match status" value="1"/>
</dbReference>
<dbReference type="FunFam" id="2.40.50.140:FF:000004">
    <property type="entry name" value="Elongation factor P"/>
    <property type="match status" value="1"/>
</dbReference>
<dbReference type="FunFam" id="2.40.50.140:FF:000009">
    <property type="entry name" value="Elongation factor P"/>
    <property type="match status" value="1"/>
</dbReference>
<dbReference type="Gene3D" id="2.30.30.30">
    <property type="match status" value="1"/>
</dbReference>
<dbReference type="Gene3D" id="2.40.50.140">
    <property type="entry name" value="Nucleic acid-binding proteins"/>
    <property type="match status" value="2"/>
</dbReference>
<dbReference type="HAMAP" id="MF_00141">
    <property type="entry name" value="EF_P"/>
    <property type="match status" value="1"/>
</dbReference>
<dbReference type="InterPro" id="IPR015365">
    <property type="entry name" value="Elong-fact-P_C"/>
</dbReference>
<dbReference type="InterPro" id="IPR012340">
    <property type="entry name" value="NA-bd_OB-fold"/>
</dbReference>
<dbReference type="InterPro" id="IPR014722">
    <property type="entry name" value="Rib_uL2_dom2"/>
</dbReference>
<dbReference type="InterPro" id="IPR020599">
    <property type="entry name" value="Transl_elong_fac_P/YeiP"/>
</dbReference>
<dbReference type="InterPro" id="IPR013185">
    <property type="entry name" value="Transl_elong_KOW-like"/>
</dbReference>
<dbReference type="InterPro" id="IPR001059">
    <property type="entry name" value="Transl_elong_P/YeiP_cen"/>
</dbReference>
<dbReference type="InterPro" id="IPR013852">
    <property type="entry name" value="Transl_elong_P/YeiP_CS"/>
</dbReference>
<dbReference type="InterPro" id="IPR011768">
    <property type="entry name" value="Transl_elongation_fac_P"/>
</dbReference>
<dbReference type="InterPro" id="IPR008991">
    <property type="entry name" value="Translation_prot_SH3-like_sf"/>
</dbReference>
<dbReference type="NCBIfam" id="TIGR00038">
    <property type="entry name" value="efp"/>
    <property type="match status" value="1"/>
</dbReference>
<dbReference type="NCBIfam" id="NF001810">
    <property type="entry name" value="PRK00529.1"/>
    <property type="match status" value="1"/>
</dbReference>
<dbReference type="PANTHER" id="PTHR30053">
    <property type="entry name" value="ELONGATION FACTOR P"/>
    <property type="match status" value="1"/>
</dbReference>
<dbReference type="PANTHER" id="PTHR30053:SF12">
    <property type="entry name" value="ELONGATION FACTOR P (EF-P) FAMILY PROTEIN"/>
    <property type="match status" value="1"/>
</dbReference>
<dbReference type="Pfam" id="PF01132">
    <property type="entry name" value="EFP"/>
    <property type="match status" value="1"/>
</dbReference>
<dbReference type="Pfam" id="PF08207">
    <property type="entry name" value="EFP_N"/>
    <property type="match status" value="1"/>
</dbReference>
<dbReference type="Pfam" id="PF09285">
    <property type="entry name" value="Elong-fact-P_C"/>
    <property type="match status" value="1"/>
</dbReference>
<dbReference type="PIRSF" id="PIRSF005901">
    <property type="entry name" value="EF-P"/>
    <property type="match status" value="1"/>
</dbReference>
<dbReference type="SMART" id="SM01185">
    <property type="entry name" value="EFP"/>
    <property type="match status" value="1"/>
</dbReference>
<dbReference type="SMART" id="SM00841">
    <property type="entry name" value="Elong-fact-P_C"/>
    <property type="match status" value="1"/>
</dbReference>
<dbReference type="SUPFAM" id="SSF50249">
    <property type="entry name" value="Nucleic acid-binding proteins"/>
    <property type="match status" value="2"/>
</dbReference>
<dbReference type="SUPFAM" id="SSF50104">
    <property type="entry name" value="Translation proteins SH3-like domain"/>
    <property type="match status" value="1"/>
</dbReference>
<dbReference type="PROSITE" id="PS01275">
    <property type="entry name" value="EFP"/>
    <property type="match status" value="1"/>
</dbReference>
<gene>
    <name evidence="1" type="primary">efp</name>
    <name type="ordered locus">YPTS_0434</name>
</gene>
<sequence>MASYYSNDFRPGLKIMFEGEPYAVESSEFVKPGKGQAFARVKMRRLLTGGRVEKTFKSTDSLEGADVNDMNLTYLYNDGEFWHFMNNETYEQLQADAKAVGDNGKWLIDQAECIVTLWNGQPIAVTPPNFVELEIVDTDPGLKGDTAGTGGKPATLSTGAVVKVPLFVQVGEIIKVDTRSGEYVSRVK</sequence>
<feature type="chain" id="PRO_1000096228" description="Elongation factor P">
    <location>
        <begin position="1"/>
        <end position="188"/>
    </location>
</feature>
<feature type="modified residue" description="N6-(3,6-diaminohexanoyl)-5-hydroxylysine" evidence="1">
    <location>
        <position position="34"/>
    </location>
</feature>
<proteinExistence type="inferred from homology"/>
<protein>
    <recommendedName>
        <fullName evidence="1">Elongation factor P</fullName>
        <shortName evidence="1">EF-P</shortName>
    </recommendedName>
</protein>
<comment type="function">
    <text evidence="1">Involved in peptide bond synthesis. Alleviates ribosome stalling that occurs when 3 or more consecutive Pro residues or the sequence PPG is present in a protein, possibly by augmenting the peptidyl transferase activity of the ribosome. Modification of Lys-34 is required for alleviation.</text>
</comment>
<comment type="pathway">
    <text evidence="1">Protein biosynthesis; polypeptide chain elongation.</text>
</comment>
<comment type="subcellular location">
    <subcellularLocation>
        <location evidence="1">Cytoplasm</location>
    </subcellularLocation>
</comment>
<comment type="PTM">
    <text evidence="1">May be beta-lysylated on the epsilon-amino group of Lys-34 by the combined action of EpmA and EpmB, and then hydroxylated on the C5 position of the same residue by EpmC (if this protein is present). Lysylation is critical for the stimulatory effect of EF-P on peptide-bond formation. The lysylation moiety may extend toward the peptidyltransferase center and stabilize the terminal 3-CCA end of the tRNA. Hydroxylation of the C5 position on Lys-34 may allow additional potential stabilizing hydrogen-bond interactions with the P-tRNA.</text>
</comment>
<comment type="similarity">
    <text evidence="1">Belongs to the elongation factor P family.</text>
</comment>